<comment type="function">
    <text evidence="1">Catalyzes the hydrolysis of glutamine to glutamate and ammonia as part of the biosynthesis of pyridoxal 5'-phosphate. The resulting ammonia molecule is channeled to the active site of PdxS.</text>
</comment>
<comment type="catalytic activity">
    <reaction evidence="1">
        <text>aldehydo-D-ribose 5-phosphate + D-glyceraldehyde 3-phosphate + L-glutamine = pyridoxal 5'-phosphate + L-glutamate + phosphate + 3 H2O + H(+)</text>
        <dbReference type="Rhea" id="RHEA:31507"/>
        <dbReference type="ChEBI" id="CHEBI:15377"/>
        <dbReference type="ChEBI" id="CHEBI:15378"/>
        <dbReference type="ChEBI" id="CHEBI:29985"/>
        <dbReference type="ChEBI" id="CHEBI:43474"/>
        <dbReference type="ChEBI" id="CHEBI:58273"/>
        <dbReference type="ChEBI" id="CHEBI:58359"/>
        <dbReference type="ChEBI" id="CHEBI:59776"/>
        <dbReference type="ChEBI" id="CHEBI:597326"/>
        <dbReference type="EC" id="4.3.3.6"/>
    </reaction>
</comment>
<comment type="catalytic activity">
    <reaction evidence="1">
        <text>L-glutamine + H2O = L-glutamate + NH4(+)</text>
        <dbReference type="Rhea" id="RHEA:15889"/>
        <dbReference type="ChEBI" id="CHEBI:15377"/>
        <dbReference type="ChEBI" id="CHEBI:28938"/>
        <dbReference type="ChEBI" id="CHEBI:29985"/>
        <dbReference type="ChEBI" id="CHEBI:58359"/>
        <dbReference type="EC" id="3.5.1.2"/>
    </reaction>
</comment>
<comment type="pathway">
    <text evidence="1">Cofactor biosynthesis; pyridoxal 5'-phosphate biosynthesis.</text>
</comment>
<comment type="subunit">
    <text evidence="1">In the presence of PdxS, forms a dodecamer of heterodimers. Only shows activity in the heterodimer.</text>
</comment>
<comment type="similarity">
    <text evidence="1">Belongs to the glutaminase PdxT/SNO family.</text>
</comment>
<dbReference type="EC" id="4.3.3.6" evidence="1"/>
<dbReference type="EC" id="3.5.1.2" evidence="1"/>
<dbReference type="EMBL" id="CP000866">
    <property type="protein sequence ID" value="ABX13374.1"/>
    <property type="molecule type" value="Genomic_DNA"/>
</dbReference>
<dbReference type="RefSeq" id="WP_012215861.1">
    <property type="nucleotide sequence ID" value="NC_010085.1"/>
</dbReference>
<dbReference type="SMR" id="A9A4S0"/>
<dbReference type="FunCoup" id="A9A4S0">
    <property type="interactions" value="74"/>
</dbReference>
<dbReference type="STRING" id="436308.Nmar_1478"/>
<dbReference type="EnsemblBacteria" id="ABX13374">
    <property type="protein sequence ID" value="ABX13374"/>
    <property type="gene ID" value="Nmar_1478"/>
</dbReference>
<dbReference type="GeneID" id="5773463"/>
<dbReference type="KEGG" id="nmr:Nmar_1478"/>
<dbReference type="eggNOG" id="arCOG00034">
    <property type="taxonomic scope" value="Archaea"/>
</dbReference>
<dbReference type="HOGENOM" id="CLU_069674_2_0_2"/>
<dbReference type="InParanoid" id="A9A4S0"/>
<dbReference type="OrthoDB" id="26717at2157"/>
<dbReference type="PhylomeDB" id="A9A4S0"/>
<dbReference type="UniPathway" id="UPA00245"/>
<dbReference type="Proteomes" id="UP000000792">
    <property type="component" value="Chromosome"/>
</dbReference>
<dbReference type="GO" id="GO:0005829">
    <property type="term" value="C:cytosol"/>
    <property type="evidence" value="ECO:0000318"/>
    <property type="project" value="GO_Central"/>
</dbReference>
<dbReference type="GO" id="GO:1903600">
    <property type="term" value="C:glutaminase complex"/>
    <property type="evidence" value="ECO:0000318"/>
    <property type="project" value="GO_Central"/>
</dbReference>
<dbReference type="GO" id="GO:0004359">
    <property type="term" value="F:glutaminase activity"/>
    <property type="evidence" value="ECO:0007669"/>
    <property type="project" value="UniProtKB-UniRule"/>
</dbReference>
<dbReference type="GO" id="GO:0036381">
    <property type="term" value="F:pyridoxal 5'-phosphate synthase (glutamine hydrolysing) activity"/>
    <property type="evidence" value="ECO:0007669"/>
    <property type="project" value="UniProtKB-UniRule"/>
</dbReference>
<dbReference type="GO" id="GO:0006543">
    <property type="term" value="P:glutamine catabolic process"/>
    <property type="evidence" value="ECO:0007669"/>
    <property type="project" value="UniProtKB-UniRule"/>
</dbReference>
<dbReference type="GO" id="GO:0042823">
    <property type="term" value="P:pyridoxal phosphate biosynthetic process"/>
    <property type="evidence" value="ECO:0000318"/>
    <property type="project" value="GO_Central"/>
</dbReference>
<dbReference type="GO" id="GO:0008614">
    <property type="term" value="P:pyridoxine metabolic process"/>
    <property type="evidence" value="ECO:0000318"/>
    <property type="project" value="GO_Central"/>
</dbReference>
<dbReference type="CDD" id="cd01749">
    <property type="entry name" value="GATase1_PB"/>
    <property type="match status" value="1"/>
</dbReference>
<dbReference type="FunFam" id="3.40.50.880:FF:000010">
    <property type="entry name" value="uncharacterized protein LOC100176842 isoform X2"/>
    <property type="match status" value="1"/>
</dbReference>
<dbReference type="Gene3D" id="3.40.50.880">
    <property type="match status" value="1"/>
</dbReference>
<dbReference type="HAMAP" id="MF_01615">
    <property type="entry name" value="PdxT"/>
    <property type="match status" value="1"/>
</dbReference>
<dbReference type="InterPro" id="IPR029062">
    <property type="entry name" value="Class_I_gatase-like"/>
</dbReference>
<dbReference type="InterPro" id="IPR002161">
    <property type="entry name" value="PdxT/SNO"/>
</dbReference>
<dbReference type="InterPro" id="IPR021196">
    <property type="entry name" value="PdxT/SNO_CS"/>
</dbReference>
<dbReference type="NCBIfam" id="TIGR03800">
    <property type="entry name" value="PLP_synth_Pdx2"/>
    <property type="match status" value="1"/>
</dbReference>
<dbReference type="PANTHER" id="PTHR31559">
    <property type="entry name" value="PYRIDOXAL 5'-PHOSPHATE SYNTHASE SUBUNIT SNO"/>
    <property type="match status" value="1"/>
</dbReference>
<dbReference type="PANTHER" id="PTHR31559:SF0">
    <property type="entry name" value="PYRIDOXAL 5'-PHOSPHATE SYNTHASE SUBUNIT SNO1-RELATED"/>
    <property type="match status" value="1"/>
</dbReference>
<dbReference type="Pfam" id="PF01174">
    <property type="entry name" value="SNO"/>
    <property type="match status" value="1"/>
</dbReference>
<dbReference type="PIRSF" id="PIRSF005639">
    <property type="entry name" value="Glut_amidoT_SNO"/>
    <property type="match status" value="1"/>
</dbReference>
<dbReference type="SUPFAM" id="SSF52317">
    <property type="entry name" value="Class I glutamine amidotransferase-like"/>
    <property type="match status" value="1"/>
</dbReference>
<dbReference type="PROSITE" id="PS01236">
    <property type="entry name" value="PDXT_SNO_1"/>
    <property type="match status" value="1"/>
</dbReference>
<dbReference type="PROSITE" id="PS51130">
    <property type="entry name" value="PDXT_SNO_2"/>
    <property type="match status" value="1"/>
</dbReference>
<organism>
    <name type="scientific">Nitrosopumilus maritimus (strain SCM1)</name>
    <dbReference type="NCBI Taxonomy" id="436308"/>
    <lineage>
        <taxon>Archaea</taxon>
        <taxon>Nitrososphaerota</taxon>
        <taxon>Nitrososphaeria</taxon>
        <taxon>Nitrosopumilales</taxon>
        <taxon>Nitrosopumilaceae</taxon>
        <taxon>Nitrosopumilus</taxon>
    </lineage>
</organism>
<sequence length="205" mass="21915">MSAKIGILAIQGDVAENVSSLVASIADLNQDATVHVVKTPEEISAMDGLVIPGGESTTIGQLSLVNGSQKVIKQKVESGMPVLGICAGMVLLASNATDRVVGKTEQPLFDFLDIELERNSFGRQRESFEANVSMDSIGISNYNGVFIRAPAISSTSDDIEVLAKLNEKIVAIKKGNIIGTSFHPELTDDLAVHKYFVNLVKETKQ</sequence>
<evidence type="ECO:0000255" key="1">
    <source>
        <dbReference type="HAMAP-Rule" id="MF_01615"/>
    </source>
</evidence>
<name>PDXT_NITMS</name>
<reference key="1">
    <citation type="journal article" date="2010" name="Proc. Natl. Acad. Sci. U.S.A.">
        <title>Nitrosopumilus maritimus genome reveals unique mechanisms for nitrification and autotrophy in globally distributed marine crenarchaea.</title>
        <authorList>
            <person name="Walker C.B."/>
            <person name="de la Torre J.R."/>
            <person name="Klotz M.G."/>
            <person name="Urakawa H."/>
            <person name="Pinel N."/>
            <person name="Arp D.J."/>
            <person name="Brochier-Armanet C."/>
            <person name="Chain P.S."/>
            <person name="Chan P.P."/>
            <person name="Gollabgir A."/>
            <person name="Hemp J."/>
            <person name="Hugler M."/>
            <person name="Karr E.A."/>
            <person name="Konneke M."/>
            <person name="Shin M."/>
            <person name="Lawton T.J."/>
            <person name="Lowe T."/>
            <person name="Martens-Habbena W."/>
            <person name="Sayavedra-Soto L.A."/>
            <person name="Lang D."/>
            <person name="Sievert S.M."/>
            <person name="Rosenzweig A.C."/>
            <person name="Manning G."/>
            <person name="Stahl D.A."/>
        </authorList>
    </citation>
    <scope>NUCLEOTIDE SEQUENCE [LARGE SCALE GENOMIC DNA]</scope>
    <source>
        <strain>SCM1</strain>
    </source>
</reference>
<feature type="chain" id="PRO_1000185897" description="Pyridoxal 5'-phosphate synthase subunit PdxT">
    <location>
        <begin position="1"/>
        <end position="205"/>
    </location>
</feature>
<feature type="active site" description="Nucleophile" evidence="1">
    <location>
        <position position="86"/>
    </location>
</feature>
<feature type="active site" description="Charge relay system" evidence="1">
    <location>
        <position position="183"/>
    </location>
</feature>
<feature type="active site" description="Charge relay system" evidence="1">
    <location>
        <position position="185"/>
    </location>
</feature>
<feature type="binding site" evidence="1">
    <location>
        <begin position="54"/>
        <end position="56"/>
    </location>
    <ligand>
        <name>L-glutamine</name>
        <dbReference type="ChEBI" id="CHEBI:58359"/>
    </ligand>
</feature>
<feature type="binding site" evidence="1">
    <location>
        <position position="118"/>
    </location>
    <ligand>
        <name>L-glutamine</name>
        <dbReference type="ChEBI" id="CHEBI:58359"/>
    </ligand>
</feature>
<feature type="binding site" evidence="1">
    <location>
        <begin position="147"/>
        <end position="148"/>
    </location>
    <ligand>
        <name>L-glutamine</name>
        <dbReference type="ChEBI" id="CHEBI:58359"/>
    </ligand>
</feature>
<keyword id="KW-0315">Glutamine amidotransferase</keyword>
<keyword id="KW-0378">Hydrolase</keyword>
<keyword id="KW-0456">Lyase</keyword>
<keyword id="KW-0663">Pyridoxal phosphate</keyword>
<keyword id="KW-1185">Reference proteome</keyword>
<proteinExistence type="inferred from homology"/>
<accession>A9A4S0</accession>
<protein>
    <recommendedName>
        <fullName evidence="1">Pyridoxal 5'-phosphate synthase subunit PdxT</fullName>
        <ecNumber evidence="1">4.3.3.6</ecNumber>
    </recommendedName>
    <alternativeName>
        <fullName evidence="1">Pdx2</fullName>
    </alternativeName>
    <alternativeName>
        <fullName evidence="1">Pyridoxal 5'-phosphate synthase glutaminase subunit</fullName>
        <ecNumber evidence="1">3.5.1.2</ecNumber>
    </alternativeName>
</protein>
<gene>
    <name evidence="1" type="primary">pdxT</name>
    <name type="ordered locus">Nmar_1478</name>
</gene>